<gene>
    <name evidence="6" type="primary">SLC25A31</name>
    <name evidence="8" type="ORF">QtsA-12102</name>
</gene>
<keyword id="KW-0050">Antiport</keyword>
<keyword id="KW-1003">Cell membrane</keyword>
<keyword id="KW-0966">Cell projection</keyword>
<keyword id="KW-0969">Cilium</keyword>
<keyword id="KW-0221">Differentiation</keyword>
<keyword id="KW-0282">Flagellum</keyword>
<keyword id="KW-0472">Membrane</keyword>
<keyword id="KW-0496">Mitochondrion</keyword>
<keyword id="KW-0999">Mitochondrion inner membrane</keyword>
<keyword id="KW-1185">Reference proteome</keyword>
<keyword id="KW-0677">Repeat</keyword>
<keyword id="KW-0744">Spermatogenesis</keyword>
<keyword id="KW-0812">Transmembrane</keyword>
<keyword id="KW-1133">Transmembrane helix</keyword>
<keyword id="KW-0813">Transport</keyword>
<evidence type="ECO:0000250" key="1">
    <source>
        <dbReference type="UniProtKB" id="G2QNH0"/>
    </source>
</evidence>
<evidence type="ECO:0000250" key="2">
    <source>
        <dbReference type="UniProtKB" id="P02722"/>
    </source>
</evidence>
<evidence type="ECO:0000250" key="3">
    <source>
        <dbReference type="UniProtKB" id="P12235"/>
    </source>
</evidence>
<evidence type="ECO:0000250" key="4">
    <source>
        <dbReference type="UniProtKB" id="P48962"/>
    </source>
</evidence>
<evidence type="ECO:0000250" key="5">
    <source>
        <dbReference type="UniProtKB" id="Q3V132"/>
    </source>
</evidence>
<evidence type="ECO:0000250" key="6">
    <source>
        <dbReference type="UniProtKB" id="Q9H0C2"/>
    </source>
</evidence>
<evidence type="ECO:0000255" key="7"/>
<evidence type="ECO:0000303" key="8">
    <source ref="1"/>
</evidence>
<evidence type="ECO:0000305" key="9"/>
<comment type="function">
    <text evidence="1 4 5 6">ADP:ATP antiporter that mediates import of ADP into the mitochondrial matrix for ATP synthesis, and export of ATP out to fuel the cell (By similarity). Cycles between the cytoplasmic-open state (c-state) and the matrix-open state (m-state): operates by the alternating access mechanism with a single substrate-binding site intermittently exposed to either the cytosolic (c-state) or matrix (m-state) side of the inner mitochondrial membrane (By similarity). Specifically required during spermatogenesis, probably to mediate ADP:ATP exchange in spermatocytes. Large ATP supplies from mitochondria may be critical for normal progression of spermatogenesis during early stages of meiotic prophase I, including DNA double-strand break repair and chromosomal synapsis. In addition to its ADP:ATP antiporter activity, also involved in mitochondrial uncoupling and mitochondrial permeability transition pore (mPTP) activity (By similarity). Plays a role in mitochondrial uncoupling by acting as a proton transporter: proton transport uncouples the proton flows via the electron transport chain and ATP synthase to reduce the efficiency of ATP production and cause mitochondrial thermogenesis. Proton transporter activity is inhibited by ADP:ATP antiporter activity, suggesting that SLC25A31/ANT4 acts as a master regulator of mitochondrial energy output by maintaining a delicate balance between ATP production (ADP:ATP antiporter activity) and thermogenesis (proton transporter activity). Proton transporter activity requires free fatty acids as cofactor, but does not transport it (By similarity). Among nucleotides, may also exchange ADP for dATP and dADP (By similarity). Also plays a key role in mPTP opening, a non-specific pore that enables free passage of the mitochondrial membranes to solutes of up to 1.5 kDa, and which contributes to cell death. It is however unclear if SLC25A31/ANT4 constitutes a pore-forming component of mPTP or regulates it (By similarity).</text>
</comment>
<comment type="catalytic activity">
    <reaction evidence="4 6">
        <text>ADP(in) + ATP(out) = ADP(out) + ATP(in)</text>
        <dbReference type="Rhea" id="RHEA:34999"/>
        <dbReference type="ChEBI" id="CHEBI:30616"/>
        <dbReference type="ChEBI" id="CHEBI:456216"/>
    </reaction>
    <physiologicalReaction direction="left-to-right" evidence="6">
        <dbReference type="Rhea" id="RHEA:35000"/>
    </physiologicalReaction>
    <physiologicalReaction direction="right-to-left" evidence="6">
        <dbReference type="Rhea" id="RHEA:35001"/>
    </physiologicalReaction>
</comment>
<comment type="catalytic activity">
    <reaction evidence="6">
        <text>dATP(out) + ADP(in) = dATP(in) + ADP(out)</text>
        <dbReference type="Rhea" id="RHEA:73699"/>
        <dbReference type="ChEBI" id="CHEBI:61404"/>
        <dbReference type="ChEBI" id="CHEBI:456216"/>
    </reaction>
    <physiologicalReaction direction="left-to-right" evidence="6">
        <dbReference type="Rhea" id="RHEA:73700"/>
    </physiologicalReaction>
    <physiologicalReaction direction="right-to-left" evidence="6">
        <dbReference type="Rhea" id="RHEA:73701"/>
    </physiologicalReaction>
</comment>
<comment type="catalytic activity">
    <reaction evidence="6">
        <text>dADP(in) + ADP(out) = dADP(out) + ADP(in)</text>
        <dbReference type="Rhea" id="RHEA:72855"/>
        <dbReference type="ChEBI" id="CHEBI:57667"/>
        <dbReference type="ChEBI" id="CHEBI:456216"/>
    </reaction>
    <physiologicalReaction direction="left-to-right" evidence="6">
        <dbReference type="Rhea" id="RHEA:72856"/>
    </physiologicalReaction>
    <physiologicalReaction direction="right-to-left" evidence="6">
        <dbReference type="Rhea" id="RHEA:72857"/>
    </physiologicalReaction>
</comment>
<comment type="catalytic activity">
    <reaction evidence="4">
        <text>H(+)(in) = H(+)(out)</text>
        <dbReference type="Rhea" id="RHEA:34979"/>
        <dbReference type="ChEBI" id="CHEBI:15378"/>
    </reaction>
</comment>
<comment type="activity regulation">
    <text evidence="1 4">The matrix-open state (m-state) is inhibited by the membrane-permeable bongkrekic acid (BKA). The cytoplasmic-open state (c-state) is inhibited by the membrane-impermeable toxic inhibitor carboxyatractyloside (CATR) (By similarity). Proton transporter activity is inhibited by ADP:ATP antiporter activity (By similarity).</text>
</comment>
<comment type="subunit">
    <text evidence="1 2">Monomer.</text>
</comment>
<comment type="subcellular location">
    <subcellularLocation>
        <location evidence="2 6">Mitochondrion inner membrane</location>
        <topology evidence="7">Multi-pass membrane protein</topology>
    </subcellularLocation>
    <subcellularLocation>
        <location evidence="6">Membrane</location>
        <topology evidence="7">Multi-pass membrane protein</topology>
    </subcellularLocation>
    <subcellularLocation>
        <location evidence="5">Cell projection</location>
        <location evidence="5">Cilium</location>
        <location evidence="5">Flagellum membrane</location>
        <topology evidence="7">Multi-pass membrane protein</topology>
    </subcellularLocation>
    <text evidence="6">In sperm flagellum this protein is located in the fibrous sheath, a non-mitochondrial region (By similarity). May localize to non-mitochondrial membranes (By similarity).</text>
</comment>
<comment type="domain">
    <text evidence="2">The transmembrane helices are not perpendicular to the plane of the membrane, but cross the membrane at an angle. Odd-numbered transmembrane helices exhibit a sharp kink, due to the presence of a conserved proline residue.</text>
</comment>
<comment type="similarity">
    <text evidence="9">Belongs to the mitochondrial carrier (TC 2.A.29) family.</text>
</comment>
<reference key="1">
    <citation type="submission" date="2005-06" db="EMBL/GenBank/DDBJ databases">
        <title>DNA sequences of macaque genes expressed in brain or testis and its evolutionary implications.</title>
        <authorList>
            <consortium name="International consortium for macaque cDNA sequencing and analysis"/>
        </authorList>
    </citation>
    <scope>NUCLEOTIDE SEQUENCE [LARGE SCALE MRNA]</scope>
    <source>
        <tissue>Testis</tissue>
    </source>
</reference>
<dbReference type="EMBL" id="AB168432">
    <property type="protein sequence ID" value="BAE00552.1"/>
    <property type="molecule type" value="mRNA"/>
</dbReference>
<dbReference type="RefSeq" id="NP_001274602.1">
    <property type="nucleotide sequence ID" value="NM_001287673.1"/>
</dbReference>
<dbReference type="RefSeq" id="XP_045248789.1">
    <property type="nucleotide sequence ID" value="XM_045392854.2"/>
</dbReference>
<dbReference type="SMR" id="Q4R8M0"/>
<dbReference type="STRING" id="9541.ENSMFAP00000037526"/>
<dbReference type="Ensembl" id="ENSMFAT00000011776.2">
    <property type="protein sequence ID" value="ENSMFAP00000037526.1"/>
    <property type="gene ID" value="ENSMFAG00000000529.2"/>
</dbReference>
<dbReference type="GeneID" id="102143674"/>
<dbReference type="VEuPathDB" id="HostDB:ENSMFAG00000038000"/>
<dbReference type="eggNOG" id="KOG0749">
    <property type="taxonomic scope" value="Eukaryota"/>
</dbReference>
<dbReference type="GeneTree" id="ENSGT00390000001301"/>
<dbReference type="OMA" id="FRGIHHF"/>
<dbReference type="Proteomes" id="UP000233100">
    <property type="component" value="Chromosome 5"/>
</dbReference>
<dbReference type="Bgee" id="ENSMFAG00000000529">
    <property type="expression patterns" value="Expressed in pituitary gland and 13 other cell types or tissues"/>
</dbReference>
<dbReference type="GO" id="GO:0016020">
    <property type="term" value="C:membrane"/>
    <property type="evidence" value="ECO:0000250"/>
    <property type="project" value="UniProtKB"/>
</dbReference>
<dbReference type="GO" id="GO:0005743">
    <property type="term" value="C:mitochondrial inner membrane"/>
    <property type="evidence" value="ECO:0007669"/>
    <property type="project" value="UniProtKB-SubCell"/>
</dbReference>
<dbReference type="GO" id="GO:0005757">
    <property type="term" value="C:mitochondrial permeability transition pore complex"/>
    <property type="evidence" value="ECO:0000250"/>
    <property type="project" value="UniProtKB"/>
</dbReference>
<dbReference type="GO" id="GO:0031514">
    <property type="term" value="C:motile cilium"/>
    <property type="evidence" value="ECO:0007669"/>
    <property type="project" value="UniProtKB-KW"/>
</dbReference>
<dbReference type="GO" id="GO:0005886">
    <property type="term" value="C:plasma membrane"/>
    <property type="evidence" value="ECO:0007669"/>
    <property type="project" value="UniProtKB-KW"/>
</dbReference>
<dbReference type="GO" id="GO:0005471">
    <property type="term" value="F:ATP:ADP antiporter activity"/>
    <property type="evidence" value="ECO:0007669"/>
    <property type="project" value="InterPro"/>
</dbReference>
<dbReference type="GO" id="GO:0030154">
    <property type="term" value="P:cell differentiation"/>
    <property type="evidence" value="ECO:0007669"/>
    <property type="project" value="UniProtKB-KW"/>
</dbReference>
<dbReference type="GO" id="GO:0007141">
    <property type="term" value="P:male meiosis I"/>
    <property type="evidence" value="ECO:0000250"/>
    <property type="project" value="UniProtKB"/>
</dbReference>
<dbReference type="GO" id="GO:0140021">
    <property type="term" value="P:mitochondrial ADP transmembrane transport"/>
    <property type="evidence" value="ECO:0007669"/>
    <property type="project" value="InterPro"/>
</dbReference>
<dbReference type="GO" id="GO:1990544">
    <property type="term" value="P:mitochondrial ATP transmembrane transport"/>
    <property type="evidence" value="ECO:0007669"/>
    <property type="project" value="InterPro"/>
</dbReference>
<dbReference type="GO" id="GO:1901029">
    <property type="term" value="P:negative regulation of mitochondrial outer membrane permeabilization involved in apoptotic signaling pathway"/>
    <property type="evidence" value="ECO:0007669"/>
    <property type="project" value="TreeGrafter"/>
</dbReference>
<dbReference type="GO" id="GO:0046902">
    <property type="term" value="P:regulation of mitochondrial membrane permeability"/>
    <property type="evidence" value="ECO:0000250"/>
    <property type="project" value="UniProtKB"/>
</dbReference>
<dbReference type="GO" id="GO:0007283">
    <property type="term" value="P:spermatogenesis"/>
    <property type="evidence" value="ECO:0000250"/>
    <property type="project" value="UniProtKB"/>
</dbReference>
<dbReference type="FunFam" id="1.50.40.10:FF:000002">
    <property type="entry name" value="Putative ADP/ATP translocase 2-like"/>
    <property type="match status" value="1"/>
</dbReference>
<dbReference type="Gene3D" id="1.50.40.10">
    <property type="entry name" value="Mitochondrial carrier domain"/>
    <property type="match status" value="1"/>
</dbReference>
<dbReference type="InterPro" id="IPR002113">
    <property type="entry name" value="ADT_euk_type"/>
</dbReference>
<dbReference type="InterPro" id="IPR002067">
    <property type="entry name" value="Mit_carrier"/>
</dbReference>
<dbReference type="InterPro" id="IPR018108">
    <property type="entry name" value="Mitochondrial_sb/sol_carrier"/>
</dbReference>
<dbReference type="InterPro" id="IPR023395">
    <property type="entry name" value="Mt_carrier_dom_sf"/>
</dbReference>
<dbReference type="PANTHER" id="PTHR45635">
    <property type="entry name" value="ADP,ATP CARRIER PROTEIN 1-RELATED-RELATED"/>
    <property type="match status" value="1"/>
</dbReference>
<dbReference type="PANTHER" id="PTHR45635:SF40">
    <property type="entry name" value="ADP_ATP TRANSLOCASE 4"/>
    <property type="match status" value="1"/>
</dbReference>
<dbReference type="Pfam" id="PF00153">
    <property type="entry name" value="Mito_carr"/>
    <property type="match status" value="3"/>
</dbReference>
<dbReference type="PRINTS" id="PR00927">
    <property type="entry name" value="ADPTRNSLCASE"/>
</dbReference>
<dbReference type="PRINTS" id="PR00926">
    <property type="entry name" value="MITOCARRIER"/>
</dbReference>
<dbReference type="SUPFAM" id="SSF103506">
    <property type="entry name" value="Mitochondrial carrier"/>
    <property type="match status" value="1"/>
</dbReference>
<dbReference type="PROSITE" id="PS50920">
    <property type="entry name" value="SOLCAR"/>
    <property type="match status" value="3"/>
</dbReference>
<proteinExistence type="evidence at transcript level"/>
<accession>Q4R8M0</accession>
<sequence>MHREPPKKKAEKRLFDASSFGKDLLAGGVAAAVSKTAVAPIERVKLLLQVQASSKQISPEARYKGMVDCLVRIPREQGFFSFWRGNLANVIRYFPTQALNFAFKDKYKQLFMSGVNKEKQFWRWFLANLASGGAAGATSLCVVYPLDFARTRLGVDIGKGPEERQFKGLGDCIMKIAKSDGIAGLYQGFGVSVQGIIVYRASYFGAYDTVKGLLPKPKKTPFLVSFFIAQVVTTCSGILSYPFDTVRRRMMMQSGEAKRQYKGTLDCFVKIYQHEGINSFFRGAFSNVLRGTGGALVLVLYDKIKEFFHIDIGGR</sequence>
<organism>
    <name type="scientific">Macaca fascicularis</name>
    <name type="common">Crab-eating macaque</name>
    <name type="synonym">Cynomolgus monkey</name>
    <dbReference type="NCBI Taxonomy" id="9541"/>
    <lineage>
        <taxon>Eukaryota</taxon>
        <taxon>Metazoa</taxon>
        <taxon>Chordata</taxon>
        <taxon>Craniata</taxon>
        <taxon>Vertebrata</taxon>
        <taxon>Euteleostomi</taxon>
        <taxon>Mammalia</taxon>
        <taxon>Eutheria</taxon>
        <taxon>Euarchontoglires</taxon>
        <taxon>Primates</taxon>
        <taxon>Haplorrhini</taxon>
        <taxon>Catarrhini</taxon>
        <taxon>Cercopithecidae</taxon>
        <taxon>Cercopithecinae</taxon>
        <taxon>Macaca</taxon>
    </lineage>
</organism>
<name>ADT4_MACFA</name>
<protein>
    <recommendedName>
        <fullName evidence="9">ADP/ATP translocase 4</fullName>
    </recommendedName>
    <alternativeName>
        <fullName evidence="5">ADP,ATP carrier protein 4</fullName>
    </alternativeName>
    <alternativeName>
        <fullName evidence="5">Adenine nucleotide translocator 4</fullName>
        <shortName evidence="5">ANT 4</shortName>
    </alternativeName>
    <alternativeName>
        <fullName evidence="9">Solute carrier family 25 member 31</fullName>
    </alternativeName>
</protein>
<feature type="chain" id="PRO_0000297625" description="ADP/ATP translocase 4">
    <location>
        <begin position="1"/>
        <end position="315"/>
    </location>
</feature>
<feature type="topological domain" description="Mitochondrial intermembrane" evidence="9">
    <location>
        <begin position="1"/>
        <end position="19"/>
    </location>
</feature>
<feature type="transmembrane region" description="Helical; Name=1" evidence="2">
    <location>
        <begin position="20"/>
        <end position="49"/>
    </location>
</feature>
<feature type="topological domain" description="Mitochondrial matrix" evidence="9">
    <location>
        <begin position="50"/>
        <end position="86"/>
    </location>
</feature>
<feature type="transmembrane region" description="Helical; Name=2" evidence="2">
    <location>
        <begin position="87"/>
        <end position="111"/>
    </location>
</feature>
<feature type="topological domain" description="Mitochondrial intermembrane" evidence="9">
    <location>
        <begin position="112"/>
        <end position="121"/>
    </location>
</feature>
<feature type="transmembrane region" description="Helical; Name=3" evidence="2">
    <location>
        <begin position="122"/>
        <end position="142"/>
    </location>
</feature>
<feature type="topological domain" description="Mitochondrial matrix" evidence="9">
    <location>
        <begin position="143"/>
        <end position="190"/>
    </location>
</feature>
<feature type="transmembrane region" description="Helical; Name=4" evidence="2">
    <location>
        <begin position="191"/>
        <end position="211"/>
    </location>
</feature>
<feature type="topological domain" description="Mitochondrial intermembrane" evidence="9">
    <location>
        <begin position="212"/>
        <end position="222"/>
    </location>
</feature>
<feature type="transmembrane region" description="Helical; Name=5" evidence="2">
    <location>
        <begin position="223"/>
        <end position="243"/>
    </location>
</feature>
<feature type="topological domain" description="Mitochondrial matrix" evidence="9">
    <location>
        <begin position="244"/>
        <end position="283"/>
    </location>
</feature>
<feature type="transmembrane region" description="Helical; Name=6" evidence="2">
    <location>
        <begin position="284"/>
        <end position="301"/>
    </location>
</feature>
<feature type="topological domain" description="Mitochondrial intermembrane" evidence="9">
    <location>
        <begin position="302"/>
        <end position="315"/>
    </location>
</feature>
<feature type="repeat" description="Solcar 1">
    <location>
        <begin position="18"/>
        <end position="110"/>
    </location>
</feature>
<feature type="repeat" description="Solcar 2">
    <location>
        <begin position="123"/>
        <end position="213"/>
    </location>
</feature>
<feature type="repeat" description="Solcar 3">
    <location>
        <begin position="220"/>
        <end position="307"/>
    </location>
</feature>
<feature type="region of interest" description="Important for transport activity" evidence="3">
    <location>
        <begin position="247"/>
        <end position="252"/>
    </location>
</feature>
<feature type="short sequence motif" description="Nucleotide carrier signature motif" evidence="2">
    <location>
        <begin position="247"/>
        <end position="252"/>
    </location>
</feature>
<feature type="binding site" evidence="2">
    <location>
        <position position="92"/>
    </location>
    <ligand>
        <name>ADP</name>
        <dbReference type="ChEBI" id="CHEBI:456216"/>
    </ligand>
</feature>
<feature type="binding site" evidence="2">
    <location>
        <position position="104"/>
    </location>
    <ligand>
        <name>ADP</name>
        <dbReference type="ChEBI" id="CHEBI:456216"/>
    </ligand>
</feature>
<feature type="binding site" evidence="2">
    <location>
        <position position="247"/>
    </location>
    <ligand>
        <name>ADP</name>
        <dbReference type="ChEBI" id="CHEBI:456216"/>
    </ligand>
</feature>